<reference key="1">
    <citation type="journal article" date="1989" name="Biochemistry">
        <title>Two bovine genes for mitochondrial ADP/ATP translocase expressed differences in various tissues.</title>
        <authorList>
            <person name="Powell S.J."/>
            <person name="Medd S.M."/>
            <person name="Runswick M.J."/>
            <person name="Walker J.E."/>
        </authorList>
    </citation>
    <scope>NUCLEOTIDE SEQUENCE [MRNA]</scope>
    <scope>TISSUE SPECIFICITY</scope>
</reference>
<reference key="2">
    <citation type="journal article" date="1982" name="Hoppe-Seyler's Z. Physiol. Chem.">
        <title>Complete amino acid sequence of the ADP/ATP carrier from beef heart mitochondria.</title>
        <authorList>
            <person name="Aquila H."/>
            <person name="Misra D."/>
            <person name="Eulitz M."/>
            <person name="Klingenberg M."/>
        </authorList>
    </citation>
    <scope>PROTEIN SEQUENCE OF 2-298</scope>
    <scope>ACETYLATION AT SER-2</scope>
</reference>
<reference key="3">
    <citation type="journal article" date="1986" name="Biochem. Biophys. Res. Commun.">
        <title>Bovine cardiac mitochondrial ADP/ATP-carrier: two distinct mRNAs and an unusually short 3'-noncoding sequence.</title>
        <authorList>
            <person name="Rasmussen U.B."/>
            <person name="Wohlrab H."/>
        </authorList>
    </citation>
    <scope>NUCLEOTIDE SEQUENCE [MRNA] OF 208-298</scope>
</reference>
<reference key="4">
    <citation type="journal article" date="1994" name="J. Biol. Chem.">
        <title>The reconstituted ADP/ATP carrier can mediate H+ transport by free fatty acids, which is further stimulated by mersalyl.</title>
        <authorList>
            <person name="Brustovetsky N."/>
            <person name="Klingenberg M."/>
        </authorList>
    </citation>
    <scope>FUNCTION</scope>
</reference>
<reference key="5">
    <citation type="journal article" date="2003" name="Nature">
        <title>Structure of mitochondrial ADP/ATP carrier in complex with carboxyatractyloside.</title>
        <authorList>
            <person name="Pebay-Peyroula E."/>
            <person name="Dahout-Gonzalez C."/>
            <person name="Kahn R."/>
            <person name="Trezeguet V."/>
            <person name="Lauquin G.J.-M."/>
            <person name="Brandolin G."/>
        </authorList>
    </citation>
    <scope>X-RAY CRYSTALLOGRAPHY (2.2 ANGSTROMS) IN COMPLEX WITH INHIBITOR</scope>
    <scope>TISSUE SPECIFICITY</scope>
    <scope>SUBCELLULAR LOCATION</scope>
    <scope>TOPOLOGY</scope>
    <scope>DOMAIN</scope>
</reference>
<reference evidence="16" key="6">
    <citation type="journal article" date="2005" name="FEBS Lett.">
        <title>Structural basis for lipid-mediated interactions between mitochondrial ADP/ATP carrier monomers.</title>
        <authorList>
            <person name="Nury H."/>
            <person name="Dahout-Gonzalez C."/>
            <person name="Trezeguet V."/>
            <person name="Lauquin G."/>
            <person name="Brandolin G."/>
            <person name="Pebay-Peyroula E."/>
        </authorList>
    </citation>
    <scope>X-RAY CRYSTALLOGRAPHY (2.80 ANGSTROMS) OF 2-298</scope>
    <scope>TISSUE SPECIFICITY</scope>
    <scope>SUBCELLULAR LOCATION</scope>
    <scope>SUBUNIT</scope>
    <scope>TOPOLOGY</scope>
    <scope>DOMAIN</scope>
</reference>
<sequence length="298" mass="32967">MSDQALSFLKDFLAGGVAAAISKTAVAPIERVKLLLQVQHASKQISAEKQYKGIIDCVVRIPKEQGFLSFWRGNLANVIRYFPTQALNFAFKDKYKQIFLGGVDRHKQFWRYFAGNLASGGAAGATSLCFVYPLDFARTRLAADVGKGAAQREFTGLGNCITKIFKSDGLRGLYQGFNVSVQGIIIYRAAYFGVYDTAKGMLPDPKNVHIIVSWMIAQTVTAVAGLVSYPFDTVRRRMMMQSGRKGADIMYTGTVDCWRKIAKDEGPKAFFKGAWSNVLRGMGGAFVLVLYDEIKKFV</sequence>
<organism>
    <name type="scientific">Bos taurus</name>
    <name type="common">Bovine</name>
    <dbReference type="NCBI Taxonomy" id="9913"/>
    <lineage>
        <taxon>Eukaryota</taxon>
        <taxon>Metazoa</taxon>
        <taxon>Chordata</taxon>
        <taxon>Craniata</taxon>
        <taxon>Vertebrata</taxon>
        <taxon>Euteleostomi</taxon>
        <taxon>Mammalia</taxon>
        <taxon>Eutheria</taxon>
        <taxon>Laurasiatheria</taxon>
        <taxon>Artiodactyla</taxon>
        <taxon>Ruminantia</taxon>
        <taxon>Pecora</taxon>
        <taxon>Bovidae</taxon>
        <taxon>Bovinae</taxon>
        <taxon>Bos</taxon>
    </lineage>
</organism>
<gene>
    <name evidence="2" type="primary">SLC25A4</name>
    <name evidence="3" type="synonym">AAC1</name>
    <name evidence="11" type="synonym">ANT1</name>
</gene>
<feature type="initiator methionine" description="Removed" evidence="9">
    <location>
        <position position="1"/>
    </location>
</feature>
<feature type="chain" id="PRO_0000090573" description="ADP/ATP translocase 1">
    <location>
        <begin position="2"/>
        <end position="298"/>
    </location>
</feature>
<feature type="topological domain" description="Mitochondrial intermembrane" evidence="13">
    <location>
        <begin position="1"/>
        <end position="7"/>
    </location>
</feature>
<feature type="transmembrane region" description="Helical; Name=1" evidence="6 7">
    <location>
        <begin position="8"/>
        <end position="37"/>
    </location>
</feature>
<feature type="topological domain" description="Mitochondrial matrix" evidence="13">
    <location>
        <begin position="38"/>
        <end position="74"/>
    </location>
</feature>
<feature type="transmembrane region" description="Helical; Name=2" evidence="6 7">
    <location>
        <begin position="75"/>
        <end position="99"/>
    </location>
</feature>
<feature type="topological domain" description="Mitochondrial intermembrane" evidence="13">
    <location>
        <begin position="100"/>
        <end position="109"/>
    </location>
</feature>
<feature type="transmembrane region" description="Helical; Name=3" evidence="6 7">
    <location>
        <begin position="110"/>
        <end position="130"/>
    </location>
</feature>
<feature type="topological domain" description="Mitochondrial matrix" evidence="13">
    <location>
        <begin position="131"/>
        <end position="178"/>
    </location>
</feature>
<feature type="transmembrane region" description="Helical; Name=4" evidence="6 7">
    <location>
        <begin position="179"/>
        <end position="199"/>
    </location>
</feature>
<feature type="topological domain" description="Mitochondrial intermembrane" evidence="13">
    <location>
        <begin position="200"/>
        <end position="210"/>
    </location>
</feature>
<feature type="transmembrane region" description="Helical; Name=5" evidence="6 7">
    <location>
        <begin position="211"/>
        <end position="231"/>
    </location>
</feature>
<feature type="topological domain" description="Mitochondrial matrix" evidence="13">
    <location>
        <begin position="232"/>
        <end position="273"/>
    </location>
</feature>
<feature type="transmembrane region" description="Helical; Name=6" evidence="6 7">
    <location>
        <begin position="274"/>
        <end position="291"/>
    </location>
</feature>
<feature type="topological domain" description="Mitochondrial intermembrane" evidence="13">
    <location>
        <begin position="292"/>
        <end position="298"/>
    </location>
</feature>
<feature type="repeat" description="Solcar 1">
    <location>
        <begin position="6"/>
        <end position="98"/>
    </location>
</feature>
<feature type="repeat" description="Solcar 2">
    <location>
        <begin position="111"/>
        <end position="201"/>
    </location>
</feature>
<feature type="repeat" description="Solcar 3">
    <location>
        <begin position="212"/>
        <end position="297"/>
    </location>
</feature>
<feature type="region of interest" description="Important for transport activity" evidence="2">
    <location>
        <begin position="235"/>
        <end position="240"/>
    </location>
</feature>
<feature type="short sequence motif" description="Nucleotide carrier signature motif" evidence="13">
    <location>
        <begin position="235"/>
        <end position="240"/>
    </location>
</feature>
<feature type="binding site" evidence="14">
    <location>
        <position position="80"/>
    </location>
    <ligand>
        <name>ADP</name>
        <dbReference type="ChEBI" id="CHEBI:456216"/>
    </ligand>
</feature>
<feature type="binding site" evidence="14">
    <location>
        <position position="92"/>
    </location>
    <ligand>
        <name>ADP</name>
        <dbReference type="ChEBI" id="CHEBI:456216"/>
    </ligand>
</feature>
<feature type="binding site" evidence="14">
    <location>
        <position position="235"/>
    </location>
    <ligand>
        <name>ADP</name>
        <dbReference type="ChEBI" id="CHEBI:456216"/>
    </ligand>
</feature>
<feature type="modified residue" description="N-acetylserine" evidence="9">
    <location>
        <position position="2"/>
    </location>
</feature>
<feature type="modified residue" description="Phosphoserine" evidence="4">
    <location>
        <position position="7"/>
    </location>
</feature>
<feature type="modified residue" description="N6,N6,N6-trimethyllysine" evidence="4">
    <location>
        <position position="52"/>
    </location>
</feature>
<feature type="modified residue" description="N6-methyllysine" evidence="5">
    <location>
        <position position="52"/>
    </location>
</feature>
<feature type="modified residue" description="N6-succinyllysine" evidence="3">
    <location>
        <position position="147"/>
    </location>
</feature>
<feature type="modified residue" description="S-nitrosocysteine" evidence="4">
    <location>
        <position position="160"/>
    </location>
</feature>
<feature type="modified residue" description="N6-succinyllysine" evidence="3">
    <location>
        <position position="245"/>
    </location>
</feature>
<feature type="modified residue" description="N6-succinyllysine" evidence="3">
    <location>
        <position position="272"/>
    </location>
</feature>
<feature type="helix" evidence="17">
    <location>
        <begin position="5"/>
        <end position="25"/>
    </location>
</feature>
<feature type="helix" evidence="17">
    <location>
        <begin position="27"/>
        <end position="38"/>
    </location>
</feature>
<feature type="helix" evidence="17">
    <location>
        <begin position="39"/>
        <end position="41"/>
    </location>
</feature>
<feature type="helix" evidence="17">
    <location>
        <begin position="47"/>
        <end position="49"/>
    </location>
</feature>
<feature type="helix" evidence="17">
    <location>
        <begin position="54"/>
        <end position="65"/>
    </location>
</feature>
<feature type="helix" evidence="17">
    <location>
        <begin position="67"/>
        <end position="71"/>
    </location>
</feature>
<feature type="turn" evidence="17">
    <location>
        <begin position="72"/>
        <end position="74"/>
    </location>
</feature>
<feature type="helix" evidence="17">
    <location>
        <begin position="75"/>
        <end position="100"/>
    </location>
</feature>
<feature type="turn" evidence="17">
    <location>
        <begin position="105"/>
        <end position="107"/>
    </location>
</feature>
<feature type="helix" evidence="17">
    <location>
        <begin position="109"/>
        <end position="143"/>
    </location>
</feature>
<feature type="turn" evidence="17">
    <location>
        <begin position="149"/>
        <end position="151"/>
    </location>
</feature>
<feature type="helix" evidence="17">
    <location>
        <begin position="157"/>
        <end position="168"/>
    </location>
</feature>
<feature type="helix" evidence="17">
    <location>
        <begin position="170"/>
        <end position="173"/>
    </location>
</feature>
<feature type="turn" evidence="17">
    <location>
        <begin position="174"/>
        <end position="176"/>
    </location>
</feature>
<feature type="helix" evidence="17">
    <location>
        <begin position="177"/>
        <end position="200"/>
    </location>
</feature>
<feature type="helix" evidence="17">
    <location>
        <begin position="204"/>
        <end position="206"/>
    </location>
</feature>
<feature type="helix" evidence="17">
    <location>
        <begin position="210"/>
        <end position="239"/>
    </location>
</feature>
<feature type="turn" evidence="17">
    <location>
        <begin position="240"/>
        <end position="243"/>
    </location>
</feature>
<feature type="helix" evidence="17">
    <location>
        <begin position="246"/>
        <end position="248"/>
    </location>
</feature>
<feature type="helix" evidence="17">
    <location>
        <begin position="254"/>
        <end position="265"/>
    </location>
</feature>
<feature type="helix" evidence="17">
    <location>
        <begin position="267"/>
        <end position="271"/>
    </location>
</feature>
<feature type="helix" evidence="17">
    <location>
        <begin position="274"/>
        <end position="292"/>
    </location>
</feature>
<dbReference type="EMBL" id="M13783">
    <property type="protein sequence ID" value="AAA30363.1"/>
    <property type="molecule type" value="mRNA"/>
</dbReference>
<dbReference type="EMBL" id="M24102">
    <property type="protein sequence ID" value="AAA30768.1"/>
    <property type="molecule type" value="mRNA"/>
</dbReference>
<dbReference type="PIR" id="A43646">
    <property type="entry name" value="XWBO"/>
</dbReference>
<dbReference type="RefSeq" id="NP_777083.1">
    <property type="nucleotide sequence ID" value="NM_174658.2"/>
</dbReference>
<dbReference type="PDB" id="1OKC">
    <property type="method" value="X-ray"/>
    <property type="resolution" value="2.20 A"/>
    <property type="chains" value="A=2-298"/>
</dbReference>
<dbReference type="PDB" id="2C3E">
    <property type="method" value="X-ray"/>
    <property type="resolution" value="2.80 A"/>
    <property type="chains" value="A=2-298"/>
</dbReference>
<dbReference type="PDBsum" id="1OKC"/>
<dbReference type="PDBsum" id="2C3E"/>
<dbReference type="SMR" id="P02722"/>
<dbReference type="FunCoup" id="P02722">
    <property type="interactions" value="2155"/>
</dbReference>
<dbReference type="IntAct" id="P02722">
    <property type="interactions" value="1"/>
</dbReference>
<dbReference type="STRING" id="9913.ENSBTAP00000017580"/>
<dbReference type="GlyGen" id="P02722">
    <property type="glycosylation" value="1 site, 1 O-linked glycan (1 site)"/>
</dbReference>
<dbReference type="iPTMnet" id="P02722"/>
<dbReference type="PaxDb" id="9913-ENSBTAP00000017580"/>
<dbReference type="PeptideAtlas" id="P02722"/>
<dbReference type="GeneID" id="282478"/>
<dbReference type="KEGG" id="bta:282478"/>
<dbReference type="CTD" id="291"/>
<dbReference type="VEuPathDB" id="HostDB:ENSBTAG00000013208"/>
<dbReference type="eggNOG" id="KOG0749">
    <property type="taxonomic scope" value="Eukaryota"/>
</dbReference>
<dbReference type="HOGENOM" id="CLU_015166_12_0_1"/>
<dbReference type="InParanoid" id="P02722"/>
<dbReference type="OMA" id="CWATIYK"/>
<dbReference type="OrthoDB" id="270584at2759"/>
<dbReference type="TreeFam" id="TF300743"/>
<dbReference type="Reactome" id="R-BTA-1268020">
    <property type="pathway name" value="Mitochondrial protein import"/>
</dbReference>
<dbReference type="Reactome" id="R-BTA-166187">
    <property type="pathway name" value="Mitochondrial Uncoupling"/>
</dbReference>
<dbReference type="Reactome" id="R-BTA-83936">
    <property type="pathway name" value="Transport of nucleosides and free purine and pyrimidine bases across the plasma membrane"/>
</dbReference>
<dbReference type="EvolutionaryTrace" id="P02722"/>
<dbReference type="Proteomes" id="UP000009136">
    <property type="component" value="Chromosome 27"/>
</dbReference>
<dbReference type="Bgee" id="ENSBTAG00000013208">
    <property type="expression patterns" value="Expressed in cardiac ventricle and 103 other cell types or tissues"/>
</dbReference>
<dbReference type="GO" id="GO:0005743">
    <property type="term" value="C:mitochondrial inner membrane"/>
    <property type="evidence" value="ECO:0000250"/>
    <property type="project" value="UniProtKB"/>
</dbReference>
<dbReference type="GO" id="GO:0031966">
    <property type="term" value="C:mitochondrial membrane"/>
    <property type="evidence" value="ECO:0000314"/>
    <property type="project" value="UniProtKB"/>
</dbReference>
<dbReference type="GO" id="GO:0005757">
    <property type="term" value="C:mitochondrial permeability transition pore complex"/>
    <property type="evidence" value="ECO:0000250"/>
    <property type="project" value="UniProtKB"/>
</dbReference>
<dbReference type="GO" id="GO:0005471">
    <property type="term" value="F:ATP:ADP antiporter activity"/>
    <property type="evidence" value="ECO:0000250"/>
    <property type="project" value="UniProtKB"/>
</dbReference>
<dbReference type="GO" id="GO:0017077">
    <property type="term" value="F:oxidative phosphorylation uncoupler activity"/>
    <property type="evidence" value="ECO:0000250"/>
    <property type="project" value="UniProtKB"/>
</dbReference>
<dbReference type="GO" id="GO:1990845">
    <property type="term" value="P:adaptive thermogenesis"/>
    <property type="evidence" value="ECO:0000250"/>
    <property type="project" value="UniProtKB"/>
</dbReference>
<dbReference type="GO" id="GO:0015866">
    <property type="term" value="P:ADP transport"/>
    <property type="evidence" value="ECO:0000250"/>
    <property type="project" value="UniProtKB"/>
</dbReference>
<dbReference type="GO" id="GO:0140021">
    <property type="term" value="P:mitochondrial ADP transmembrane transport"/>
    <property type="evidence" value="ECO:0000250"/>
    <property type="project" value="UniProtKB"/>
</dbReference>
<dbReference type="GO" id="GO:1990544">
    <property type="term" value="P:mitochondrial ATP transmembrane transport"/>
    <property type="evidence" value="ECO:0000250"/>
    <property type="project" value="UniProtKB"/>
</dbReference>
<dbReference type="GO" id="GO:1901029">
    <property type="term" value="P:negative regulation of mitochondrial outer membrane permeabilization involved in apoptotic signaling pathway"/>
    <property type="evidence" value="ECO:0000318"/>
    <property type="project" value="GO_Central"/>
</dbReference>
<dbReference type="GO" id="GO:1901526">
    <property type="term" value="P:positive regulation of mitophagy"/>
    <property type="evidence" value="ECO:0000250"/>
    <property type="project" value="UniProtKB"/>
</dbReference>
<dbReference type="GO" id="GO:0046902">
    <property type="term" value="P:regulation of mitochondrial membrane permeability"/>
    <property type="evidence" value="ECO:0000250"/>
    <property type="project" value="UniProtKB"/>
</dbReference>
<dbReference type="FunFam" id="1.50.40.10:FF:000002">
    <property type="entry name" value="Putative ADP/ATP translocase 2-like"/>
    <property type="match status" value="1"/>
</dbReference>
<dbReference type="Gene3D" id="1.50.40.10">
    <property type="entry name" value="Mitochondrial carrier domain"/>
    <property type="match status" value="1"/>
</dbReference>
<dbReference type="InterPro" id="IPR002113">
    <property type="entry name" value="ADT_euk_type"/>
</dbReference>
<dbReference type="InterPro" id="IPR002067">
    <property type="entry name" value="Mit_carrier"/>
</dbReference>
<dbReference type="InterPro" id="IPR018108">
    <property type="entry name" value="Mitochondrial_sb/sol_carrier"/>
</dbReference>
<dbReference type="InterPro" id="IPR023395">
    <property type="entry name" value="Mt_carrier_dom_sf"/>
</dbReference>
<dbReference type="PANTHER" id="PTHR45635">
    <property type="entry name" value="ADP,ATP CARRIER PROTEIN 1-RELATED-RELATED"/>
    <property type="match status" value="1"/>
</dbReference>
<dbReference type="PANTHER" id="PTHR45635:SF32">
    <property type="entry name" value="ADP_ATP TRANSLOCASE 1"/>
    <property type="match status" value="1"/>
</dbReference>
<dbReference type="Pfam" id="PF00153">
    <property type="entry name" value="Mito_carr"/>
    <property type="match status" value="3"/>
</dbReference>
<dbReference type="PRINTS" id="PR00927">
    <property type="entry name" value="ADPTRNSLCASE"/>
</dbReference>
<dbReference type="PRINTS" id="PR00926">
    <property type="entry name" value="MITOCARRIER"/>
</dbReference>
<dbReference type="SUPFAM" id="SSF103506">
    <property type="entry name" value="Mitochondrial carrier"/>
    <property type="match status" value="1"/>
</dbReference>
<dbReference type="PROSITE" id="PS50920">
    <property type="entry name" value="SOLCAR"/>
    <property type="match status" value="3"/>
</dbReference>
<evidence type="ECO:0000250" key="1">
    <source>
        <dbReference type="UniProtKB" id="G2QNH0"/>
    </source>
</evidence>
<evidence type="ECO:0000250" key="2">
    <source>
        <dbReference type="UniProtKB" id="P12235"/>
    </source>
</evidence>
<evidence type="ECO:0000250" key="3">
    <source>
        <dbReference type="UniProtKB" id="P48962"/>
    </source>
</evidence>
<evidence type="ECO:0000250" key="4">
    <source>
        <dbReference type="UniProtKB" id="Q05962"/>
    </source>
</evidence>
<evidence type="ECO:0000255" key="5"/>
<evidence type="ECO:0000269" key="6">
    <source>
    </source>
</evidence>
<evidence type="ECO:0000269" key="7">
    <source>
    </source>
</evidence>
<evidence type="ECO:0000269" key="8">
    <source>
    </source>
</evidence>
<evidence type="ECO:0000269" key="9">
    <source>
    </source>
</evidence>
<evidence type="ECO:0000269" key="10">
    <source>
    </source>
</evidence>
<evidence type="ECO:0000303" key="11">
    <source>
    </source>
</evidence>
<evidence type="ECO:0000303" key="12">
    <source>
    </source>
</evidence>
<evidence type="ECO:0000305" key="13"/>
<evidence type="ECO:0000305" key="14">
    <source>
    </source>
</evidence>
<evidence type="ECO:0000305" key="15">
    <source>
    </source>
</evidence>
<evidence type="ECO:0007744" key="16">
    <source>
        <dbReference type="PDB" id="2C3E"/>
    </source>
</evidence>
<evidence type="ECO:0007829" key="17">
    <source>
        <dbReference type="PDB" id="1OKC"/>
    </source>
</evidence>
<proteinExistence type="evidence at protein level"/>
<keyword id="KW-0002">3D-structure</keyword>
<keyword id="KW-0007">Acetylation</keyword>
<keyword id="KW-0050">Antiport</keyword>
<keyword id="KW-0903">Direct protein sequencing</keyword>
<keyword id="KW-0472">Membrane</keyword>
<keyword id="KW-0488">Methylation</keyword>
<keyword id="KW-0496">Mitochondrion</keyword>
<keyword id="KW-0999">Mitochondrion inner membrane</keyword>
<keyword id="KW-0597">Phosphoprotein</keyword>
<keyword id="KW-1185">Reference proteome</keyword>
<keyword id="KW-0677">Repeat</keyword>
<keyword id="KW-0702">S-nitrosylation</keyword>
<keyword id="KW-0812">Transmembrane</keyword>
<keyword id="KW-1133">Transmembrane helix</keyword>
<keyword id="KW-0813">Transport</keyword>
<protein>
    <recommendedName>
        <fullName evidence="11">ADP/ATP translocase 1</fullName>
    </recommendedName>
    <alternativeName>
        <fullName evidence="12">ADP,ATP carrier protein 1</fullName>
    </alternativeName>
    <alternativeName>
        <fullName evidence="11">ADP,ATP carrier protein, heart isoform T1</fullName>
    </alternativeName>
    <alternativeName>
        <fullName evidence="11">Adenine nucleotide translocator 1</fullName>
        <shortName evidence="11">ANT 1</shortName>
    </alternativeName>
    <alternativeName>
        <fullName evidence="13">Solute carrier family 25 member 4</fullName>
    </alternativeName>
</protein>
<name>ADT1_BOVIN</name>
<accession>P02722</accession>
<comment type="function">
    <text evidence="1 3 10">ADP:ATP antiporter that mediates import of ADP into the mitochondrial matrix for ATP synthesis, and export of ATP out to fuel the cell (By similarity). Cycles between the cytoplasmic-open state (c-state) and the matrix-open state (m-state): operates by the alternating access mechanism with a single substrate-binding site intermittently exposed to either the cytosolic (c-state) or matrix (m-state) side of the inner mitochondrial membrane (By similarity). In addition to its ADP:ATP antiporter activity, also involved in mitochondrial uncoupling and mitochondrial permeability transition pore (mPTP) activity (By similarity). Plays a role in mitochondrial uncoupling by acting as a proton transporter: proton transport uncouples the proton flows via the electron transport chain and ATP synthase to reduce the efficiency of ATP production and cause mitochondrial thermogenesis (PubMed:7961643). Proton transporter activity is inhibited by ADP:ATP antiporter activity, suggesting that SLC25A4/ANT1 acts as a master regulator of mitochondrial energy output by maintaining a delicate balance between ATP production (ADP:ATP antiporter activity) and thermogenesis (proton transporter activity) (By similarity). Proton transporter activity requires free fatty acids as cofactor, but does not transport it (PubMed:7961643). Probably mediates mitochondrial uncoupling in tissues that do not express UCP1 (By similarity). Also plays a key role in mPTP opening, a non-specific pore that enables free passage of the mitochondrial membranes to solutes of up to 1.5 kDa, and which contributes to cell death (By similarity). It is however unclear if SLC25A4/ANT1 constitutes a pore-forming component of mPTP or regulates it (By similarity). Acts as a regulator of mitophagy independently of ADP:ATP antiporter activity: promotes mitophagy via interaction with TIMM44, leading to inhibit the presequence translocase TIMM23, thereby promoting stabilization of PINK1 (By similarity).</text>
</comment>
<comment type="catalytic activity">
    <reaction evidence="3">
        <text>ADP(in) + ATP(out) = ADP(out) + ATP(in)</text>
        <dbReference type="Rhea" id="RHEA:34999"/>
        <dbReference type="ChEBI" id="CHEBI:30616"/>
        <dbReference type="ChEBI" id="CHEBI:456216"/>
    </reaction>
</comment>
<comment type="catalytic activity">
    <reaction evidence="3">
        <text>H(+)(in) = H(+)(out)</text>
        <dbReference type="Rhea" id="RHEA:34979"/>
        <dbReference type="ChEBI" id="CHEBI:15378"/>
    </reaction>
</comment>
<comment type="activity regulation">
    <text evidence="1 3">The matrix-open state (m-state) is inhibited by the membrane-permeable bongkrekic acid (BKA). The cytoplasmic-open state (c-state) is inhibited by the membrane-impermeable toxic inhibitor carboxyatractyloside (CATR) (By similarity). Proton transporter activity is inhibited by ADP:ATP antiporter activity (By similarity).</text>
</comment>
<comment type="subunit">
    <text evidence="3 7">Monomer (PubMed:16226253). Found in a complex with ARL2, ARL2BP and SLC25A4/ANT1. Interacts with ARL2BP. Interacts with TIMM44; leading to inhibit the presequence translocase TIMM23, thereby promoting stabilization of PINK1 (By similarity).</text>
</comment>
<comment type="subcellular location">
    <subcellularLocation>
        <location evidence="14 15">Mitochondrion inner membrane</location>
        <topology evidence="6 7">Multi-pass membrane protein</topology>
    </subcellularLocation>
    <subcellularLocation>
        <location evidence="2">Membrane</location>
        <topology evidence="6 7">Multi-pass membrane protein</topology>
    </subcellularLocation>
    <text evidence="2 3">The complex formed with ARL2BP, ARL2 and SLC25A4/ANT1 is expressed in mitochondria (By similarity). May localize to non-mitochondrial membranes (By similarity).</text>
</comment>
<comment type="tissue specificity">
    <text evidence="6 7 8">Detected in heart muscle (at protein level) (PubMed:14603310, PubMed:16226253). Detected in heart (PubMed:2540808).</text>
</comment>
<comment type="domain">
    <text evidence="6 7">The transmembrane helices are not perpendicular to the plane of the membrane, but cross the membrane at an angle. Odd-numbered transmembrane helices exhibit a sharp kink, due to the presence of a conserved proline residue.</text>
</comment>
<comment type="PTM">
    <text evidence="3">Under cell death induction, transglutaminated by TGM2. Transglutamination leads to formation of covalent cross-links between a glutamine and the epsilon-amino group of a lysine residue, forming polymers.</text>
</comment>
<comment type="similarity">
    <text evidence="13">Belongs to the mitochondrial carrier (TC 2.A.29) family.</text>
</comment>